<protein>
    <recommendedName>
        <fullName evidence="1">Acetyl-coenzyme A carboxylase carboxyl transferase subunit alpha</fullName>
        <shortName evidence="1">ACCase subunit alpha</shortName>
        <shortName evidence="1">Acetyl-CoA carboxylase carboxyltransferase subunit alpha</shortName>
        <ecNumber evidence="1">2.1.3.15</ecNumber>
    </recommendedName>
</protein>
<feature type="chain" id="PRO_0000223769" description="Acetyl-coenzyme A carboxylase carboxyl transferase subunit alpha">
    <location>
        <begin position="1"/>
        <end position="315"/>
    </location>
</feature>
<feature type="domain" description="CoA carboxyltransferase C-terminal" evidence="2">
    <location>
        <begin position="36"/>
        <end position="289"/>
    </location>
</feature>
<organism>
    <name type="scientific">Francisella tularensis subsp. tularensis (strain SCHU S4 / Schu 4)</name>
    <dbReference type="NCBI Taxonomy" id="177416"/>
    <lineage>
        <taxon>Bacteria</taxon>
        <taxon>Pseudomonadati</taxon>
        <taxon>Pseudomonadota</taxon>
        <taxon>Gammaproteobacteria</taxon>
        <taxon>Thiotrichales</taxon>
        <taxon>Francisellaceae</taxon>
        <taxon>Francisella</taxon>
    </lineage>
</organism>
<dbReference type="EC" id="2.1.3.15" evidence="1"/>
<dbReference type="EMBL" id="AJ749949">
    <property type="protein sequence ID" value="CAG46131.1"/>
    <property type="molecule type" value="Genomic_DNA"/>
</dbReference>
<dbReference type="RefSeq" id="WP_003022368.1">
    <property type="nucleotide sequence ID" value="NC_006570.2"/>
</dbReference>
<dbReference type="RefSeq" id="YP_170433.1">
    <property type="nucleotide sequence ID" value="NC_006570.2"/>
</dbReference>
<dbReference type="SMR" id="Q5NEV9"/>
<dbReference type="STRING" id="177416.FTT_1498c"/>
<dbReference type="DNASU" id="3192200"/>
<dbReference type="EnsemblBacteria" id="CAG46131">
    <property type="protein sequence ID" value="CAG46131"/>
    <property type="gene ID" value="FTT_1498c"/>
</dbReference>
<dbReference type="KEGG" id="ftu:FTT_1498c"/>
<dbReference type="eggNOG" id="COG0825">
    <property type="taxonomic scope" value="Bacteria"/>
</dbReference>
<dbReference type="OrthoDB" id="9808023at2"/>
<dbReference type="UniPathway" id="UPA00655">
    <property type="reaction ID" value="UER00711"/>
</dbReference>
<dbReference type="Proteomes" id="UP000001174">
    <property type="component" value="Chromosome"/>
</dbReference>
<dbReference type="GO" id="GO:0009317">
    <property type="term" value="C:acetyl-CoA carboxylase complex"/>
    <property type="evidence" value="ECO:0007669"/>
    <property type="project" value="InterPro"/>
</dbReference>
<dbReference type="GO" id="GO:0003989">
    <property type="term" value="F:acetyl-CoA carboxylase activity"/>
    <property type="evidence" value="ECO:0007669"/>
    <property type="project" value="InterPro"/>
</dbReference>
<dbReference type="GO" id="GO:0005524">
    <property type="term" value="F:ATP binding"/>
    <property type="evidence" value="ECO:0007669"/>
    <property type="project" value="UniProtKB-KW"/>
</dbReference>
<dbReference type="GO" id="GO:0016743">
    <property type="term" value="F:carboxyl- or carbamoyltransferase activity"/>
    <property type="evidence" value="ECO:0007669"/>
    <property type="project" value="UniProtKB-UniRule"/>
</dbReference>
<dbReference type="GO" id="GO:0006633">
    <property type="term" value="P:fatty acid biosynthetic process"/>
    <property type="evidence" value="ECO:0007669"/>
    <property type="project" value="UniProtKB-KW"/>
</dbReference>
<dbReference type="GO" id="GO:2001295">
    <property type="term" value="P:malonyl-CoA biosynthetic process"/>
    <property type="evidence" value="ECO:0007669"/>
    <property type="project" value="UniProtKB-UniRule"/>
</dbReference>
<dbReference type="Gene3D" id="3.90.226.10">
    <property type="entry name" value="2-enoyl-CoA Hydratase, Chain A, domain 1"/>
    <property type="match status" value="1"/>
</dbReference>
<dbReference type="HAMAP" id="MF_00823">
    <property type="entry name" value="AcetylCoA_CT_alpha"/>
    <property type="match status" value="1"/>
</dbReference>
<dbReference type="InterPro" id="IPR001095">
    <property type="entry name" value="Acetyl_CoA_COase_a_su"/>
</dbReference>
<dbReference type="InterPro" id="IPR029045">
    <property type="entry name" value="ClpP/crotonase-like_dom_sf"/>
</dbReference>
<dbReference type="InterPro" id="IPR011763">
    <property type="entry name" value="COA_CT_C"/>
</dbReference>
<dbReference type="NCBIfam" id="TIGR00513">
    <property type="entry name" value="accA"/>
    <property type="match status" value="1"/>
</dbReference>
<dbReference type="NCBIfam" id="NF041504">
    <property type="entry name" value="AccA_sub"/>
    <property type="match status" value="1"/>
</dbReference>
<dbReference type="NCBIfam" id="NF004344">
    <property type="entry name" value="PRK05724.1"/>
    <property type="match status" value="1"/>
</dbReference>
<dbReference type="PANTHER" id="PTHR42853">
    <property type="entry name" value="ACETYL-COENZYME A CARBOXYLASE CARBOXYL TRANSFERASE SUBUNIT ALPHA"/>
    <property type="match status" value="1"/>
</dbReference>
<dbReference type="PANTHER" id="PTHR42853:SF3">
    <property type="entry name" value="ACETYL-COENZYME A CARBOXYLASE CARBOXYL TRANSFERASE SUBUNIT ALPHA, CHLOROPLASTIC"/>
    <property type="match status" value="1"/>
</dbReference>
<dbReference type="Pfam" id="PF03255">
    <property type="entry name" value="ACCA"/>
    <property type="match status" value="1"/>
</dbReference>
<dbReference type="PRINTS" id="PR01069">
    <property type="entry name" value="ACCCTRFRASEA"/>
</dbReference>
<dbReference type="SUPFAM" id="SSF52096">
    <property type="entry name" value="ClpP/crotonase"/>
    <property type="match status" value="1"/>
</dbReference>
<dbReference type="PROSITE" id="PS50989">
    <property type="entry name" value="COA_CT_CTER"/>
    <property type="match status" value="1"/>
</dbReference>
<name>ACCA_FRATT</name>
<gene>
    <name evidence="1" type="primary">accA</name>
    <name type="ordered locus">FTT_1498c</name>
</gene>
<comment type="function">
    <text evidence="1">Component of the acetyl coenzyme A carboxylase (ACC) complex. First, biotin carboxylase catalyzes the carboxylation of biotin on its carrier protein (BCCP) and then the CO(2) group is transferred by the carboxyltransferase to acetyl-CoA to form malonyl-CoA.</text>
</comment>
<comment type="catalytic activity">
    <reaction evidence="1">
        <text>N(6)-carboxybiotinyl-L-lysyl-[protein] + acetyl-CoA = N(6)-biotinyl-L-lysyl-[protein] + malonyl-CoA</text>
        <dbReference type="Rhea" id="RHEA:54728"/>
        <dbReference type="Rhea" id="RHEA-COMP:10505"/>
        <dbReference type="Rhea" id="RHEA-COMP:10506"/>
        <dbReference type="ChEBI" id="CHEBI:57288"/>
        <dbReference type="ChEBI" id="CHEBI:57384"/>
        <dbReference type="ChEBI" id="CHEBI:83144"/>
        <dbReference type="ChEBI" id="CHEBI:83145"/>
        <dbReference type="EC" id="2.1.3.15"/>
    </reaction>
</comment>
<comment type="pathway">
    <text evidence="1">Lipid metabolism; malonyl-CoA biosynthesis; malonyl-CoA from acetyl-CoA: step 1/1.</text>
</comment>
<comment type="subunit">
    <text evidence="1">Acetyl-CoA carboxylase is a heterohexamer composed of biotin carboxyl carrier protein (AccB), biotin carboxylase (AccC) and two subunits each of ACCase subunit alpha (AccA) and ACCase subunit beta (AccD).</text>
</comment>
<comment type="subcellular location">
    <subcellularLocation>
        <location evidence="1">Cytoplasm</location>
    </subcellularLocation>
</comment>
<comment type="similarity">
    <text evidence="1">Belongs to the AccA family.</text>
</comment>
<sequence length="315" mass="35464">MNYLDFESKIKEIEDKITSLSHVFEDEKTEVEIKKLSKKRLELMESTYSKLTDWQVVQLSRHPDRPYFKDLLPLIFTDFQELHGDRTFGDDLAVIGGLAKLNNKPVMVIGQEKGRDTKSKIKHNFGMMHPEGYRKALRLMKLAEKFNMPVVTFIDTPGAYPGIKAEERGQSEAIARNLLEMSALKVPVVCIVIGEGCSGGALGIGVGDRLLMLQYSYFATISPEGCASILHKTAEKASEVTQMMNITSGRLKELKIVDEVIPEPLGGAHRDYETTATNIRKAVAAELKILSEMTVEQRNSRRYDKLMSFGRFKEA</sequence>
<reference key="1">
    <citation type="journal article" date="2005" name="Nat. Genet.">
        <title>The complete genome sequence of Francisella tularensis, the causative agent of tularemia.</title>
        <authorList>
            <person name="Larsson P."/>
            <person name="Oyston P.C.F."/>
            <person name="Chain P."/>
            <person name="Chu M.C."/>
            <person name="Duffield M."/>
            <person name="Fuxelius H.-H."/>
            <person name="Garcia E."/>
            <person name="Haelltorp G."/>
            <person name="Johansson D."/>
            <person name="Isherwood K.E."/>
            <person name="Karp P.D."/>
            <person name="Larsson E."/>
            <person name="Liu Y."/>
            <person name="Michell S."/>
            <person name="Prior J."/>
            <person name="Prior R."/>
            <person name="Malfatti S."/>
            <person name="Sjoestedt A."/>
            <person name="Svensson K."/>
            <person name="Thompson N."/>
            <person name="Vergez L."/>
            <person name="Wagg J.K."/>
            <person name="Wren B.W."/>
            <person name="Lindler L.E."/>
            <person name="Andersson S.G.E."/>
            <person name="Forsman M."/>
            <person name="Titball R.W."/>
        </authorList>
    </citation>
    <scope>NUCLEOTIDE SEQUENCE [LARGE SCALE GENOMIC DNA]</scope>
    <source>
        <strain>SCHU S4 / Schu 4</strain>
    </source>
</reference>
<keyword id="KW-0067">ATP-binding</keyword>
<keyword id="KW-0963">Cytoplasm</keyword>
<keyword id="KW-0275">Fatty acid biosynthesis</keyword>
<keyword id="KW-0276">Fatty acid metabolism</keyword>
<keyword id="KW-0444">Lipid biosynthesis</keyword>
<keyword id="KW-0443">Lipid metabolism</keyword>
<keyword id="KW-0547">Nucleotide-binding</keyword>
<keyword id="KW-1185">Reference proteome</keyword>
<keyword id="KW-0808">Transferase</keyword>
<accession>Q5NEV9</accession>
<proteinExistence type="inferred from homology"/>
<evidence type="ECO:0000255" key="1">
    <source>
        <dbReference type="HAMAP-Rule" id="MF_00823"/>
    </source>
</evidence>
<evidence type="ECO:0000255" key="2">
    <source>
        <dbReference type="PROSITE-ProRule" id="PRU01137"/>
    </source>
</evidence>